<name>MLTF_SHEB8</name>
<dbReference type="EC" id="4.2.2.n1" evidence="1"/>
<dbReference type="EMBL" id="CP000753">
    <property type="protein sequence ID" value="ABS09126.1"/>
    <property type="molecule type" value="Genomic_DNA"/>
</dbReference>
<dbReference type="RefSeq" id="WP_006082473.1">
    <property type="nucleotide sequence ID" value="NC_009665.1"/>
</dbReference>
<dbReference type="SMR" id="A6WQN7"/>
<dbReference type="CAZy" id="GH23">
    <property type="family name" value="Glycoside Hydrolase Family 23"/>
</dbReference>
<dbReference type="GeneID" id="11773196"/>
<dbReference type="KEGG" id="sbm:Shew185_2995"/>
<dbReference type="HOGENOM" id="CLU_027494_0_1_6"/>
<dbReference type="GO" id="GO:0009279">
    <property type="term" value="C:cell outer membrane"/>
    <property type="evidence" value="ECO:0007669"/>
    <property type="project" value="UniProtKB-SubCell"/>
</dbReference>
<dbReference type="GO" id="GO:0008933">
    <property type="term" value="F:peptidoglycan lytic transglycosylase activity"/>
    <property type="evidence" value="ECO:0007669"/>
    <property type="project" value="UniProtKB-UniRule"/>
</dbReference>
<dbReference type="GO" id="GO:0016998">
    <property type="term" value="P:cell wall macromolecule catabolic process"/>
    <property type="evidence" value="ECO:0007669"/>
    <property type="project" value="UniProtKB-UniRule"/>
</dbReference>
<dbReference type="GO" id="GO:0071555">
    <property type="term" value="P:cell wall organization"/>
    <property type="evidence" value="ECO:0007669"/>
    <property type="project" value="UniProtKB-KW"/>
</dbReference>
<dbReference type="GO" id="GO:0009253">
    <property type="term" value="P:peptidoglycan catabolic process"/>
    <property type="evidence" value="ECO:0007669"/>
    <property type="project" value="TreeGrafter"/>
</dbReference>
<dbReference type="CDD" id="cd13403">
    <property type="entry name" value="MLTF-like"/>
    <property type="match status" value="1"/>
</dbReference>
<dbReference type="CDD" id="cd01009">
    <property type="entry name" value="PBP2_YfhD_N"/>
    <property type="match status" value="1"/>
</dbReference>
<dbReference type="FunFam" id="1.10.530.10:FF:000003">
    <property type="entry name" value="Membrane-bound lytic murein transglycosylase F"/>
    <property type="match status" value="1"/>
</dbReference>
<dbReference type="Gene3D" id="1.10.530.10">
    <property type="match status" value="1"/>
</dbReference>
<dbReference type="Gene3D" id="3.40.190.10">
    <property type="entry name" value="Periplasmic binding protein-like II"/>
    <property type="match status" value="2"/>
</dbReference>
<dbReference type="HAMAP" id="MF_02016">
    <property type="entry name" value="MltF"/>
    <property type="match status" value="1"/>
</dbReference>
<dbReference type="InterPro" id="IPR023346">
    <property type="entry name" value="Lysozyme-like_dom_sf"/>
</dbReference>
<dbReference type="InterPro" id="IPR023703">
    <property type="entry name" value="MltF"/>
</dbReference>
<dbReference type="InterPro" id="IPR001638">
    <property type="entry name" value="Solute-binding_3/MltF_N"/>
</dbReference>
<dbReference type="InterPro" id="IPR008258">
    <property type="entry name" value="Transglycosylase_SLT_dom_1"/>
</dbReference>
<dbReference type="NCBIfam" id="NF008112">
    <property type="entry name" value="PRK10859.1"/>
    <property type="match status" value="1"/>
</dbReference>
<dbReference type="PANTHER" id="PTHR35936">
    <property type="entry name" value="MEMBRANE-BOUND LYTIC MUREIN TRANSGLYCOSYLASE F"/>
    <property type="match status" value="1"/>
</dbReference>
<dbReference type="PANTHER" id="PTHR35936:SF32">
    <property type="entry name" value="MEMBRANE-BOUND LYTIC MUREIN TRANSGLYCOSYLASE F"/>
    <property type="match status" value="1"/>
</dbReference>
<dbReference type="Pfam" id="PF00497">
    <property type="entry name" value="SBP_bac_3"/>
    <property type="match status" value="1"/>
</dbReference>
<dbReference type="Pfam" id="PF01464">
    <property type="entry name" value="SLT"/>
    <property type="match status" value="1"/>
</dbReference>
<dbReference type="SMART" id="SM00062">
    <property type="entry name" value="PBPb"/>
    <property type="match status" value="1"/>
</dbReference>
<dbReference type="SUPFAM" id="SSF53955">
    <property type="entry name" value="Lysozyme-like"/>
    <property type="match status" value="1"/>
</dbReference>
<dbReference type="SUPFAM" id="SSF53850">
    <property type="entry name" value="Periplasmic binding protein-like II"/>
    <property type="match status" value="1"/>
</dbReference>
<dbReference type="PROSITE" id="PS51257">
    <property type="entry name" value="PROKAR_LIPOPROTEIN"/>
    <property type="match status" value="1"/>
</dbReference>
<protein>
    <recommendedName>
        <fullName evidence="1">Membrane-bound lytic murein transglycosylase F</fullName>
        <ecNumber evidence="1">4.2.2.n1</ecNumber>
    </recommendedName>
    <alternativeName>
        <fullName evidence="1">Murein lyase F</fullName>
    </alternativeName>
</protein>
<proteinExistence type="inferred from homology"/>
<organism>
    <name type="scientific">Shewanella baltica (strain OS185)</name>
    <dbReference type="NCBI Taxonomy" id="402882"/>
    <lineage>
        <taxon>Bacteria</taxon>
        <taxon>Pseudomonadati</taxon>
        <taxon>Pseudomonadota</taxon>
        <taxon>Gammaproteobacteria</taxon>
        <taxon>Alteromonadales</taxon>
        <taxon>Shewanellaceae</taxon>
        <taxon>Shewanella</taxon>
    </lineage>
</organism>
<keyword id="KW-0998">Cell outer membrane</keyword>
<keyword id="KW-0961">Cell wall biogenesis/degradation</keyword>
<keyword id="KW-0456">Lyase</keyword>
<keyword id="KW-0472">Membrane</keyword>
<keyword id="KW-0732">Signal</keyword>
<reference key="1">
    <citation type="submission" date="2007-07" db="EMBL/GenBank/DDBJ databases">
        <title>Complete sequence of chromosome of Shewanella baltica OS185.</title>
        <authorList>
            <consortium name="US DOE Joint Genome Institute"/>
            <person name="Copeland A."/>
            <person name="Lucas S."/>
            <person name="Lapidus A."/>
            <person name="Barry K."/>
            <person name="Glavina del Rio T."/>
            <person name="Dalin E."/>
            <person name="Tice H."/>
            <person name="Pitluck S."/>
            <person name="Sims D."/>
            <person name="Brettin T."/>
            <person name="Bruce D."/>
            <person name="Detter J.C."/>
            <person name="Han C."/>
            <person name="Schmutz J."/>
            <person name="Larimer F."/>
            <person name="Land M."/>
            <person name="Hauser L."/>
            <person name="Kyrpides N."/>
            <person name="Mikhailova N."/>
            <person name="Brettar I."/>
            <person name="Rodrigues J."/>
            <person name="Konstantinidis K."/>
            <person name="Tiedje J."/>
            <person name="Richardson P."/>
        </authorList>
    </citation>
    <scope>NUCLEOTIDE SEQUENCE [LARGE SCALE GENOMIC DNA]</scope>
    <source>
        <strain>OS185</strain>
    </source>
</reference>
<evidence type="ECO:0000255" key="1">
    <source>
        <dbReference type="HAMAP-Rule" id="MF_02016"/>
    </source>
</evidence>
<evidence type="ECO:0000256" key="2">
    <source>
        <dbReference type="SAM" id="MobiDB-lite"/>
    </source>
</evidence>
<gene>
    <name evidence="1" type="primary">mltF</name>
    <name type="ordered locus">Shew185_2995</name>
</gene>
<accession>A6WQN7</accession>
<sequence>MTRFLFALILGFLLTACQQVTVDETEFVPKKLTELRVGTLYGPQIYMTSGQGDSGFDYDMAVLFAEYLDVPLKMVPYTNRTELYEALKKNEIDLIAAGMTETPARREQFRLGPPLYRVNQVLVYREGMPAPKDISDLKGKITVIADSSFVETLTQLQKHYPTLVWDQITDKDSEELLAMIANKEIDYTIADSSSVQINRRYLPDLRSGPVLEEKLDVVWLLPPTRSDELMSQLLAFWHQEKLAGTLDHLNEKYFGHVKRFDYVDTRAFIRAIETVLPRYRQLFETHAGNLDWRKLAATSYQESHWNPHARSATGVRGMMMLTQPTAKEIGITNRLDAEESIRGGAAYLNDMINRLPESIPESQRMWFALASYNIGYAHVEDARKLAESMELNPNAWRDLKKVLPLLQKRKYYQKTRYGYARGSEAVHYVDSIRRYYDTLVWVDNQSKQQNPEEEPSDLASEEPAIPAGTLSPEQPK</sequence>
<feature type="signal peptide" evidence="1">
    <location>
        <begin position="1"/>
        <end position="22"/>
    </location>
</feature>
<feature type="chain" id="PRO_5000261009" description="Membrane-bound lytic murein transglycosylase F">
    <location>
        <begin position="23"/>
        <end position="476"/>
    </location>
</feature>
<feature type="region of interest" description="Non-LT domain" evidence="1">
    <location>
        <begin position="23"/>
        <end position="257"/>
    </location>
</feature>
<feature type="region of interest" description="LT domain" evidence="1">
    <location>
        <begin position="258"/>
        <end position="476"/>
    </location>
</feature>
<feature type="region of interest" description="Disordered" evidence="2">
    <location>
        <begin position="446"/>
        <end position="476"/>
    </location>
</feature>
<feature type="compositionally biased region" description="Acidic residues" evidence="2">
    <location>
        <begin position="451"/>
        <end position="460"/>
    </location>
</feature>
<feature type="active site" evidence="1">
    <location>
        <position position="302"/>
    </location>
</feature>
<comment type="function">
    <text evidence="1">Murein-degrading enzyme that degrades murein glycan strands and insoluble, high-molecular weight murein sacculi, with the concomitant formation of a 1,6-anhydromuramoyl product. Lytic transglycosylases (LTs) play an integral role in the metabolism of the peptidoglycan (PG) sacculus. Their lytic action creates space within the PG sacculus to allow for its expansion as well as for the insertion of various structures such as secretion systems and flagella.</text>
</comment>
<comment type="catalytic activity">
    <reaction evidence="1">
        <text>Exolytic cleavage of the (1-&gt;4)-beta-glycosidic linkage between N-acetylmuramic acid (MurNAc) and N-acetylglucosamine (GlcNAc) residues in peptidoglycan, from either the reducing or the non-reducing ends of the peptidoglycan chains, with concomitant formation of a 1,6-anhydrobond in the MurNAc residue.</text>
        <dbReference type="EC" id="4.2.2.n1"/>
    </reaction>
</comment>
<comment type="subcellular location">
    <subcellularLocation>
        <location>Cell outer membrane</location>
        <topology>Peripheral membrane protein</topology>
    </subcellularLocation>
    <text evidence="1">Attached to the inner leaflet of the outer membrane.</text>
</comment>
<comment type="domain">
    <text evidence="1">The N-terminal domain does not have lytic activity and probably modulates enzymatic activity. The C-terminal domain is the catalytic active domain.</text>
</comment>
<comment type="similarity">
    <text evidence="1">In the N-terminal section; belongs to the bacterial solute-binding protein 3 family.</text>
</comment>
<comment type="similarity">
    <text evidence="1">In the C-terminal section; belongs to the transglycosylase Slt family.</text>
</comment>